<dbReference type="EC" id="3.4.22.59" evidence="1"/>
<dbReference type="EMBL" id="AF082329">
    <property type="protein sequence ID" value="AAC32378.1"/>
    <property type="molecule type" value="mRNA"/>
</dbReference>
<dbReference type="EMBL" id="AF469049">
    <property type="protein sequence ID" value="AAL82386.1"/>
    <property type="molecule type" value="Genomic_DNA"/>
</dbReference>
<dbReference type="EMBL" id="AADN05000017">
    <property type="status" value="NOT_ANNOTATED_CDS"/>
    <property type="molecule type" value="Genomic_DNA"/>
</dbReference>
<dbReference type="RefSeq" id="NP_990057.1">
    <property type="nucleotide sequence ID" value="NM_204726.1"/>
</dbReference>
<dbReference type="SMR" id="A0A1D5PPP7"/>
<dbReference type="FunCoup" id="A0A1D5PPP7">
    <property type="interactions" value="539"/>
</dbReference>
<dbReference type="MEROPS" id="C14.005"/>
<dbReference type="PaxDb" id="9031-ENSGALP00000019870"/>
<dbReference type="GeneID" id="395477"/>
<dbReference type="KEGG" id="gga:395477"/>
<dbReference type="CTD" id="839"/>
<dbReference type="VEuPathDB" id="HostDB:geneid_395477"/>
<dbReference type="InParanoid" id="A0A1D5PPP7"/>
<dbReference type="OrthoDB" id="6116485at2759"/>
<dbReference type="PRO" id="PR:A0A1D5PPP7"/>
<dbReference type="Proteomes" id="UP000000539">
    <property type="component" value="Chromosome 4"/>
</dbReference>
<dbReference type="Bgee" id="ENSGALG00000012186">
    <property type="expression patterns" value="Expressed in kidney and 13 other cell types or tissues"/>
</dbReference>
<dbReference type="GO" id="GO:0005737">
    <property type="term" value="C:cytoplasm"/>
    <property type="evidence" value="ECO:0000250"/>
    <property type="project" value="UniProtKB"/>
</dbReference>
<dbReference type="GO" id="GO:0005634">
    <property type="term" value="C:nucleus"/>
    <property type="evidence" value="ECO:0000250"/>
    <property type="project" value="UniProtKB"/>
</dbReference>
<dbReference type="GO" id="GO:0004197">
    <property type="term" value="F:cysteine-type endopeptidase activity"/>
    <property type="evidence" value="ECO:0000315"/>
    <property type="project" value="AgBase"/>
</dbReference>
<dbReference type="GO" id="GO:0008234">
    <property type="term" value="F:cysteine-type peptidase activity"/>
    <property type="evidence" value="ECO:0000314"/>
    <property type="project" value="AgBase"/>
</dbReference>
<dbReference type="GO" id="GO:0002218">
    <property type="term" value="P:activation of innate immune response"/>
    <property type="evidence" value="ECO:0000250"/>
    <property type="project" value="UniProtKB"/>
</dbReference>
<dbReference type="GO" id="GO:0030263">
    <property type="term" value="P:apoptotic chromosome condensation"/>
    <property type="evidence" value="ECO:0000316"/>
    <property type="project" value="AgBase"/>
</dbReference>
<dbReference type="GO" id="GO:0006309">
    <property type="term" value="P:apoptotic DNA fragmentation"/>
    <property type="evidence" value="ECO:0000316"/>
    <property type="project" value="AgBase"/>
</dbReference>
<dbReference type="GO" id="GO:0030262">
    <property type="term" value="P:apoptotic nuclear changes"/>
    <property type="evidence" value="ECO:0000316"/>
    <property type="project" value="AgBase"/>
</dbReference>
<dbReference type="GO" id="GO:0006915">
    <property type="term" value="P:apoptotic process"/>
    <property type="evidence" value="ECO:0000315"/>
    <property type="project" value="AgBase"/>
</dbReference>
<dbReference type="GO" id="GO:0097284">
    <property type="term" value="P:hepatocyte apoptotic process"/>
    <property type="evidence" value="ECO:0000250"/>
    <property type="project" value="UniProtKB"/>
</dbReference>
<dbReference type="GO" id="GO:0072332">
    <property type="term" value="P:intrinsic apoptotic signaling pathway by p53 class mediator"/>
    <property type="evidence" value="ECO:0000250"/>
    <property type="project" value="UniProtKB"/>
</dbReference>
<dbReference type="GO" id="GO:0070306">
    <property type="term" value="P:lens fiber cell differentiation"/>
    <property type="evidence" value="ECO:0000304"/>
    <property type="project" value="AgBase"/>
</dbReference>
<dbReference type="GO" id="GO:0043065">
    <property type="term" value="P:positive regulation of apoptotic process"/>
    <property type="evidence" value="ECO:0000250"/>
    <property type="project" value="UniProtKB"/>
</dbReference>
<dbReference type="GO" id="GO:0060545">
    <property type="term" value="P:positive regulation of necroptotic process"/>
    <property type="evidence" value="ECO:0000250"/>
    <property type="project" value="UniProtKB"/>
</dbReference>
<dbReference type="GO" id="GO:0043525">
    <property type="term" value="P:positive regulation of neuron apoptotic process"/>
    <property type="evidence" value="ECO:0000318"/>
    <property type="project" value="GO_Central"/>
</dbReference>
<dbReference type="GO" id="GO:0016540">
    <property type="term" value="P:protein autoprocessing"/>
    <property type="evidence" value="ECO:0000250"/>
    <property type="project" value="UniProtKB"/>
</dbReference>
<dbReference type="GO" id="GO:0006508">
    <property type="term" value="P:proteolysis"/>
    <property type="evidence" value="ECO:0000316"/>
    <property type="project" value="AgBase"/>
</dbReference>
<dbReference type="GO" id="GO:0070269">
    <property type="term" value="P:pyroptotic inflammatory response"/>
    <property type="evidence" value="ECO:0000250"/>
    <property type="project" value="UniProtKB"/>
</dbReference>
<dbReference type="CDD" id="cd00032">
    <property type="entry name" value="CASc"/>
    <property type="match status" value="1"/>
</dbReference>
<dbReference type="FunFam" id="3.40.50.1460:FF:000001">
    <property type="entry name" value="Caspase-3 preproprotein"/>
    <property type="match status" value="1"/>
</dbReference>
<dbReference type="Gene3D" id="3.40.50.1460">
    <property type="match status" value="1"/>
</dbReference>
<dbReference type="InterPro" id="IPR029030">
    <property type="entry name" value="Caspase-like_dom_sf"/>
</dbReference>
<dbReference type="InterPro" id="IPR033139">
    <property type="entry name" value="Caspase_cys_AS"/>
</dbReference>
<dbReference type="InterPro" id="IPR002398">
    <property type="entry name" value="Pept_C14"/>
</dbReference>
<dbReference type="InterPro" id="IPR011600">
    <property type="entry name" value="Pept_C14_caspase"/>
</dbReference>
<dbReference type="InterPro" id="IPR002138">
    <property type="entry name" value="Pept_C14_p10"/>
</dbReference>
<dbReference type="InterPro" id="IPR001309">
    <property type="entry name" value="Pept_C14_p20"/>
</dbReference>
<dbReference type="InterPro" id="IPR015917">
    <property type="entry name" value="Pept_C14A"/>
</dbReference>
<dbReference type="PANTHER" id="PTHR10454">
    <property type="entry name" value="CASPASE"/>
    <property type="match status" value="1"/>
</dbReference>
<dbReference type="PANTHER" id="PTHR10454:SF206">
    <property type="entry name" value="CASPASE-6"/>
    <property type="match status" value="1"/>
</dbReference>
<dbReference type="Pfam" id="PF00656">
    <property type="entry name" value="Peptidase_C14"/>
    <property type="match status" value="1"/>
</dbReference>
<dbReference type="PIRSF" id="PIRSF038001">
    <property type="entry name" value="Caspase_ICE"/>
    <property type="match status" value="1"/>
</dbReference>
<dbReference type="PRINTS" id="PR00376">
    <property type="entry name" value="IL1BCENZYME"/>
</dbReference>
<dbReference type="SMART" id="SM00115">
    <property type="entry name" value="CASc"/>
    <property type="match status" value="1"/>
</dbReference>
<dbReference type="SUPFAM" id="SSF52129">
    <property type="entry name" value="Caspase-like"/>
    <property type="match status" value="1"/>
</dbReference>
<dbReference type="PROSITE" id="PS01122">
    <property type="entry name" value="CASPASE_CYS"/>
    <property type="match status" value="1"/>
</dbReference>
<dbReference type="PROSITE" id="PS50207">
    <property type="entry name" value="CASPASE_P10"/>
    <property type="match status" value="1"/>
</dbReference>
<dbReference type="PROSITE" id="PS50208">
    <property type="entry name" value="CASPASE_P20"/>
    <property type="match status" value="1"/>
</dbReference>
<organism>
    <name type="scientific">Gallus gallus</name>
    <name type="common">Chicken</name>
    <dbReference type="NCBI Taxonomy" id="9031"/>
    <lineage>
        <taxon>Eukaryota</taxon>
        <taxon>Metazoa</taxon>
        <taxon>Chordata</taxon>
        <taxon>Craniata</taxon>
        <taxon>Vertebrata</taxon>
        <taxon>Euteleostomi</taxon>
        <taxon>Archelosauria</taxon>
        <taxon>Archosauria</taxon>
        <taxon>Dinosauria</taxon>
        <taxon>Saurischia</taxon>
        <taxon>Theropoda</taxon>
        <taxon>Coelurosauria</taxon>
        <taxon>Aves</taxon>
        <taxon>Neognathae</taxon>
        <taxon>Galloanserae</taxon>
        <taxon>Galliformes</taxon>
        <taxon>Phasianidae</taxon>
        <taxon>Phasianinae</taxon>
        <taxon>Gallus</taxon>
    </lineage>
</organism>
<name>CASP6_CHICK</name>
<sequence>MSGAERRPAAGRVQLDSKPTPTTTADGNQNITEVDAFDKRQTFDPAVQYKMNHQRRGVALIFNHEHFFWHLRLPDRRGTLADRNNLKRSLTDLGFEVRIFDDLKAEDVLKKVFEASRDDYSNADCFVCVFLSHGENDHVYAYDAQIKIETITNMFRGDKCQSLVGKPKIFIIQACRGDKHDDPVLVQDSVDSKDETTVNQTEVDAAGVYTLPAGADFIMCYSVAQGYFSHRETVNGSWYIQDLCEALGKHGSSLEFTELLTVVNRKVSHRKVDICRDINAIGKKQIPCFASMLTKKLYFHPKSK</sequence>
<feature type="chain" id="PRO_0000454577" description="Caspase-6">
    <location>
        <begin position="1"/>
        <end position="304"/>
    </location>
</feature>
<feature type="propeptide" id="PRO_0000454578" evidence="5">
    <location>
        <begin position="1"/>
        <end position="35"/>
    </location>
</feature>
<feature type="chain" id="PRO_0000454579" description="Caspase-6 subunit p18" evidence="1">
    <location>
        <begin position="36"/>
        <end position="191"/>
    </location>
</feature>
<feature type="propeptide" id="PRO_0000454580" evidence="1">
    <location>
        <begin position="192"/>
        <end position="204"/>
    </location>
</feature>
<feature type="chain" id="PRO_0000454581" description="Caspase-6 subunit p11" evidence="1">
    <location>
        <begin position="205"/>
        <end position="304"/>
    </location>
</feature>
<feature type="region of interest" description="Disordered" evidence="2">
    <location>
        <begin position="1"/>
        <end position="29"/>
    </location>
</feature>
<feature type="region of interest" description="Tri-arginine exosite" evidence="1">
    <location>
        <begin position="54"/>
        <end position="56"/>
    </location>
</feature>
<feature type="region of interest" description="130's region" evidence="1">
    <location>
        <begin position="137"/>
        <end position="154"/>
    </location>
</feature>
<feature type="compositionally biased region" description="Polar residues" evidence="2">
    <location>
        <begin position="17"/>
        <end position="29"/>
    </location>
</feature>
<feature type="active site" evidence="1">
    <location>
        <position position="133"/>
    </location>
</feature>
<feature type="active site" evidence="1">
    <location>
        <position position="175"/>
    </location>
</feature>
<feature type="sequence conflict" description="In Ref. 1; AAC32378 and 2; AAL82386." evidence="6" ref="1 2">
    <original>Q</original>
    <variation>R</variation>
    <location>
        <position position="41"/>
    </location>
</feature>
<feature type="sequence conflict" description="In Ref. 1; AAC32378 and 2; AAL82386." evidence="6" ref="1 2">
    <original>V</original>
    <variation>E</variation>
    <location>
        <position position="47"/>
    </location>
</feature>
<protein>
    <recommendedName>
        <fullName evidence="5">Caspase-6</fullName>
        <shortName>CASP-6</shortName>
        <ecNumber evidence="1">3.4.22.59</ecNumber>
    </recommendedName>
    <component>
        <recommendedName>
            <fullName evidence="1">Caspase-6 subunit p18</fullName>
        </recommendedName>
    </component>
    <component>
        <recommendedName>
            <fullName evidence="1">Caspase-6 subunit p11</fullName>
        </recommendedName>
    </component>
</protein>
<proteinExistence type="evidence at transcript level"/>
<gene>
    <name evidence="1" type="primary">CASP6</name>
</gene>
<reference key="1">
    <citation type="journal article" date="2000" name="Biol. Reprod.">
        <title>Caspase-3 and -6 expression and enzyme activity in hen granulosa cells.</title>
        <authorList>
            <person name="Johnson A.L."/>
            <person name="Bridgham J.T."/>
        </authorList>
    </citation>
    <scope>NUCLEOTIDE SEQUENCE [MRNA]</scope>
    <scope>TISSUE SPECIFICITY</scope>
</reference>
<reference key="2">
    <citation type="journal article" date="2002" name="EMBO J.">
        <title>Caspase-6 gene disruption reveals a requirement for lamin A cleavage in apoptotic chromatin condensation.</title>
        <authorList>
            <person name="Ruchaud S."/>
            <person name="Korfali N."/>
            <person name="Villa P."/>
            <person name="Kottke T.J."/>
            <person name="Dingwall C."/>
            <person name="Kaufmann S.H."/>
            <person name="Earnshaw W.C."/>
        </authorList>
    </citation>
    <scope>NUCLEOTIDE SEQUENCE [GENOMIC DNA]</scope>
    <scope>FUNCTION</scope>
</reference>
<reference key="3">
    <citation type="journal article" date="2004" name="Nature">
        <title>Sequence and comparative analysis of the chicken genome provide unique perspectives on vertebrate evolution.</title>
        <authorList>
            <person name="Hillier L.W."/>
            <person name="Miller W."/>
            <person name="Birney E."/>
            <person name="Warren W."/>
            <person name="Hardison R.C."/>
            <person name="Ponting C.P."/>
            <person name="Bork P."/>
            <person name="Burt D.W."/>
            <person name="Groenen M.A.M."/>
            <person name="Delany M.E."/>
            <person name="Dodgson J.B."/>
            <person name="Chinwalla A.T."/>
            <person name="Cliften P.F."/>
            <person name="Clifton S.W."/>
            <person name="Delehaunty K.D."/>
            <person name="Fronick C."/>
            <person name="Fulton R.S."/>
            <person name="Graves T.A."/>
            <person name="Kremitzki C."/>
            <person name="Layman D."/>
            <person name="Magrini V."/>
            <person name="McPherson J.D."/>
            <person name="Miner T.L."/>
            <person name="Minx P."/>
            <person name="Nash W.E."/>
            <person name="Nhan M.N."/>
            <person name="Nelson J.O."/>
            <person name="Oddy L.G."/>
            <person name="Pohl C.S."/>
            <person name="Randall-Maher J."/>
            <person name="Smith S.M."/>
            <person name="Wallis J.W."/>
            <person name="Yang S.-P."/>
            <person name="Romanov M.N."/>
            <person name="Rondelli C.M."/>
            <person name="Paton B."/>
            <person name="Smith J."/>
            <person name="Morrice D."/>
            <person name="Daniels L."/>
            <person name="Tempest H.G."/>
            <person name="Robertson L."/>
            <person name="Masabanda J.S."/>
            <person name="Griffin D.K."/>
            <person name="Vignal A."/>
            <person name="Fillon V."/>
            <person name="Jacobbson L."/>
            <person name="Kerje S."/>
            <person name="Andersson L."/>
            <person name="Crooijmans R.P."/>
            <person name="Aerts J."/>
            <person name="van der Poel J.J."/>
            <person name="Ellegren H."/>
            <person name="Caldwell R.B."/>
            <person name="Hubbard S.J."/>
            <person name="Grafham D.V."/>
            <person name="Kierzek A.M."/>
            <person name="McLaren S.R."/>
            <person name="Overton I.M."/>
            <person name="Arakawa H."/>
            <person name="Beattie K.J."/>
            <person name="Bezzubov Y."/>
            <person name="Boardman P.E."/>
            <person name="Bonfield J.K."/>
            <person name="Croning M.D.R."/>
            <person name="Davies R.M."/>
            <person name="Francis M.D."/>
            <person name="Humphray S.J."/>
            <person name="Scott C.E."/>
            <person name="Taylor R.G."/>
            <person name="Tickle C."/>
            <person name="Brown W.R.A."/>
            <person name="Rogers J."/>
            <person name="Buerstedde J.-M."/>
            <person name="Wilson S.A."/>
            <person name="Stubbs L."/>
            <person name="Ovcharenko I."/>
            <person name="Gordon L."/>
            <person name="Lucas S."/>
            <person name="Miller M.M."/>
            <person name="Inoko H."/>
            <person name="Shiina T."/>
            <person name="Kaufman J."/>
            <person name="Salomonsen J."/>
            <person name="Skjoedt K."/>
            <person name="Wong G.K.-S."/>
            <person name="Wang J."/>
            <person name="Liu B."/>
            <person name="Wang J."/>
            <person name="Yu J."/>
            <person name="Yang H."/>
            <person name="Nefedov M."/>
            <person name="Koriabine M."/>
            <person name="Dejong P.J."/>
            <person name="Goodstadt L."/>
            <person name="Webber C."/>
            <person name="Dickens N.J."/>
            <person name="Letunic I."/>
            <person name="Suyama M."/>
            <person name="Torrents D."/>
            <person name="von Mering C."/>
            <person name="Zdobnov E.M."/>
            <person name="Makova K."/>
            <person name="Nekrutenko A."/>
            <person name="Elnitski L."/>
            <person name="Eswara P."/>
            <person name="King D.C."/>
            <person name="Yang S.-P."/>
            <person name="Tyekucheva S."/>
            <person name="Radakrishnan A."/>
            <person name="Harris R.S."/>
            <person name="Chiaromonte F."/>
            <person name="Taylor J."/>
            <person name="He J."/>
            <person name="Rijnkels M."/>
            <person name="Griffiths-Jones S."/>
            <person name="Ureta-Vidal A."/>
            <person name="Hoffman M.M."/>
            <person name="Severin J."/>
            <person name="Searle S.M.J."/>
            <person name="Law A.S."/>
            <person name="Speed D."/>
            <person name="Waddington D."/>
            <person name="Cheng Z."/>
            <person name="Tuzun E."/>
            <person name="Eichler E."/>
            <person name="Bao Z."/>
            <person name="Flicek P."/>
            <person name="Shteynberg D.D."/>
            <person name="Brent M.R."/>
            <person name="Bye J.M."/>
            <person name="Huckle E.J."/>
            <person name="Chatterji S."/>
            <person name="Dewey C."/>
            <person name="Pachter L."/>
            <person name="Kouranov A."/>
            <person name="Mourelatos Z."/>
            <person name="Hatzigeorgiou A.G."/>
            <person name="Paterson A.H."/>
            <person name="Ivarie R."/>
            <person name="Brandstrom M."/>
            <person name="Axelsson E."/>
            <person name="Backstrom N."/>
            <person name="Berlin S."/>
            <person name="Webster M.T."/>
            <person name="Pourquie O."/>
            <person name="Reymond A."/>
            <person name="Ucla C."/>
            <person name="Antonarakis S.E."/>
            <person name="Long M."/>
            <person name="Emerson J.J."/>
            <person name="Betran E."/>
            <person name="Dupanloup I."/>
            <person name="Kaessmann H."/>
            <person name="Hinrichs A.S."/>
            <person name="Bejerano G."/>
            <person name="Furey T.S."/>
            <person name="Harte R.A."/>
            <person name="Raney B."/>
            <person name="Siepel A."/>
            <person name="Kent W.J."/>
            <person name="Haussler D."/>
            <person name="Eyras E."/>
            <person name="Castelo R."/>
            <person name="Abril J.F."/>
            <person name="Castellano S."/>
            <person name="Camara F."/>
            <person name="Parra G."/>
            <person name="Guigo R."/>
            <person name="Bourque G."/>
            <person name="Tesler G."/>
            <person name="Pevzner P.A."/>
            <person name="Smit A."/>
            <person name="Fulton L.A."/>
            <person name="Mardis E.R."/>
            <person name="Wilson R.K."/>
        </authorList>
    </citation>
    <scope>NUCLEOTIDE SEQUENCE [LARGE SCALE GENOMIC DNA]</scope>
    <source>
        <strain>Red jungle fowl</strain>
    </source>
</reference>
<keyword id="KW-0053">Apoptosis</keyword>
<keyword id="KW-0068">Autocatalytic cleavage</keyword>
<keyword id="KW-0963">Cytoplasm</keyword>
<keyword id="KW-0378">Hydrolase</keyword>
<keyword id="KW-0539">Nucleus</keyword>
<keyword id="KW-0645">Protease</keyword>
<keyword id="KW-1185">Reference proteome</keyword>
<keyword id="KW-0788">Thiol protease</keyword>
<keyword id="KW-0865">Zymogen</keyword>
<comment type="function">
    <text evidence="1 4">Cysteine protease that plays essential roles in programmed cell death, development and innate immunity (PubMed:11953316). Acts as a non-canonical executioner caspase during apoptosis: localizes in the nucleus and cleaves the nuclear structural protein lamin-A/LMNA thereby inducing nuclear shrinkage and fragmentation (PubMed:11953316). Lamin-A/LMNA cleavage is required for chromatin condensation and nuclear disassembly during apoptotic execution (PubMed:11953316). Plays an essential role in defense against viruses by acting as a central mediator of the ZBP1-mediated pyroptosis, apoptosis, and necroptosis (PANoptosis), independently of its cysteine protease activity. PANoptosis is a unique inflammatory programmed cell death, which provides a molecular scaffold that allows the interactions and activation of machinery required for inflammasome/pyroptosis, apoptosis and necroptosis (By similarity).</text>
</comment>
<comment type="catalytic activity">
    <reaction evidence="1">
        <text>Strict requirement for Asp at position P1 and has a preferred cleavage sequence of Val-Glu-His-Asp-|-.</text>
        <dbReference type="EC" id="3.4.22.59"/>
    </reaction>
</comment>
<comment type="activity regulation">
    <text evidence="1">During activation, the N-terminal prodomain is removed by cleavage (By similarity). Concomitantly, double cleavage gives rise to a large 18-kDa and a small 11-kDa subunit (By similarity). The two large and two small subunits then assemble to form the active CASP6 complex (By similarity). Intramolecular cleavage at Asp-191 is a prerequisite for CASP6 self-activation (By similarity).</text>
</comment>
<comment type="subunit">
    <text evidence="1">Heterotetramer that consists of two anti-parallel arranged heterodimers, each one formed by a 18 kDa (p18) and a 11 kDa (p11) subunit.</text>
</comment>
<comment type="subunit">
    <molecule>Caspase-6 subunit p18</molecule>
    <text evidence="1">Heterotetramer that consists of two anti-parallel arranged heterodimers, each one formed by a 18 kDa (Caspase-6 subunit p18) and a 11 kDa (Caspase-6 subunit p11) subunit.</text>
</comment>
<comment type="subunit">
    <molecule>Caspase-6 subunit p11</molecule>
    <text evidence="1">Heterotetramer that consists of two anti-parallel arranged heterodimers, each one formed by a 18 kDa (Caspase-6 subunit p18) and a 11 kDa (Caspase-6 subunit p11) subunit.</text>
</comment>
<comment type="subcellular location">
    <subcellularLocation>
        <location evidence="1">Cytoplasm</location>
    </subcellularLocation>
    <subcellularLocation>
        <location evidence="1">Nucleus</location>
    </subcellularLocation>
</comment>
<comment type="tissue specificity">
    <text evidence="3">Widely expressed.</text>
</comment>
<comment type="domain">
    <text evidence="1">The N-terminal disordered prodomain is required to prevent self-activation.</text>
</comment>
<comment type="domain">
    <text evidence="1">The Tri-arginine exosite is required to recruit substrates for hydrolysis.</text>
</comment>
<comment type="domain">
    <text evidence="1">Undergoes helix-strand structural transitions upon substrate-binding: the 130's region interconverts between an inactive helical state and the canonically active strand state. Other caspases rest constitutively in the strand conformation before and after substrate-binding.</text>
</comment>
<comment type="similarity">
    <text evidence="6">Belongs to the peptidase C14A family.</text>
</comment>
<evidence type="ECO:0000250" key="1">
    <source>
        <dbReference type="UniProtKB" id="P55212"/>
    </source>
</evidence>
<evidence type="ECO:0000256" key="2">
    <source>
        <dbReference type="SAM" id="MobiDB-lite"/>
    </source>
</evidence>
<evidence type="ECO:0000269" key="3">
    <source>
    </source>
</evidence>
<evidence type="ECO:0000269" key="4">
    <source>
    </source>
</evidence>
<evidence type="ECO:0000303" key="5">
    <source>
    </source>
</evidence>
<evidence type="ECO:0000305" key="6"/>
<accession>A0A1D5PPP7</accession>
<accession>O93415</accession>